<organism>
    <name type="scientific">Staphylococcus epidermidis (strain ATCC 35984 / DSM 28319 / BCRC 17069 / CCUG 31568 / BM 3577 / RP62A)</name>
    <dbReference type="NCBI Taxonomy" id="176279"/>
    <lineage>
        <taxon>Bacteria</taxon>
        <taxon>Bacillati</taxon>
        <taxon>Bacillota</taxon>
        <taxon>Bacilli</taxon>
        <taxon>Bacillales</taxon>
        <taxon>Staphylococcaceae</taxon>
        <taxon>Staphylococcus</taxon>
    </lineage>
</organism>
<accession>Q5HQX0</accession>
<dbReference type="EMBL" id="CP000029">
    <property type="protein sequence ID" value="AAW53840.1"/>
    <property type="molecule type" value="Genomic_DNA"/>
</dbReference>
<dbReference type="RefSeq" id="WP_002438912.1">
    <property type="nucleotide sequence ID" value="NC_002976.3"/>
</dbReference>
<dbReference type="SMR" id="Q5HQX0"/>
<dbReference type="STRING" id="176279.SERP0426"/>
<dbReference type="KEGG" id="ser:SERP0426"/>
<dbReference type="eggNOG" id="COG0556">
    <property type="taxonomic scope" value="Bacteria"/>
</dbReference>
<dbReference type="HOGENOM" id="CLU_009621_2_1_9"/>
<dbReference type="Proteomes" id="UP000000531">
    <property type="component" value="Chromosome"/>
</dbReference>
<dbReference type="GO" id="GO:0005737">
    <property type="term" value="C:cytoplasm"/>
    <property type="evidence" value="ECO:0007669"/>
    <property type="project" value="UniProtKB-SubCell"/>
</dbReference>
<dbReference type="GO" id="GO:0009380">
    <property type="term" value="C:excinuclease repair complex"/>
    <property type="evidence" value="ECO:0007669"/>
    <property type="project" value="InterPro"/>
</dbReference>
<dbReference type="GO" id="GO:0005524">
    <property type="term" value="F:ATP binding"/>
    <property type="evidence" value="ECO:0007669"/>
    <property type="project" value="UniProtKB-UniRule"/>
</dbReference>
<dbReference type="GO" id="GO:0016887">
    <property type="term" value="F:ATP hydrolysis activity"/>
    <property type="evidence" value="ECO:0007669"/>
    <property type="project" value="InterPro"/>
</dbReference>
<dbReference type="GO" id="GO:0003677">
    <property type="term" value="F:DNA binding"/>
    <property type="evidence" value="ECO:0007669"/>
    <property type="project" value="UniProtKB-UniRule"/>
</dbReference>
<dbReference type="GO" id="GO:0009381">
    <property type="term" value="F:excinuclease ABC activity"/>
    <property type="evidence" value="ECO:0007669"/>
    <property type="project" value="UniProtKB-UniRule"/>
</dbReference>
<dbReference type="GO" id="GO:0006289">
    <property type="term" value="P:nucleotide-excision repair"/>
    <property type="evidence" value="ECO:0007669"/>
    <property type="project" value="UniProtKB-UniRule"/>
</dbReference>
<dbReference type="GO" id="GO:0009432">
    <property type="term" value="P:SOS response"/>
    <property type="evidence" value="ECO:0007669"/>
    <property type="project" value="UniProtKB-UniRule"/>
</dbReference>
<dbReference type="CDD" id="cd17916">
    <property type="entry name" value="DEXHc_UvrB"/>
    <property type="match status" value="1"/>
</dbReference>
<dbReference type="CDD" id="cd18790">
    <property type="entry name" value="SF2_C_UvrB"/>
    <property type="match status" value="1"/>
</dbReference>
<dbReference type="Gene3D" id="3.40.50.300">
    <property type="entry name" value="P-loop containing nucleotide triphosphate hydrolases"/>
    <property type="match status" value="3"/>
</dbReference>
<dbReference type="Gene3D" id="4.10.860.10">
    <property type="entry name" value="UVR domain"/>
    <property type="match status" value="1"/>
</dbReference>
<dbReference type="HAMAP" id="MF_00204">
    <property type="entry name" value="UvrB"/>
    <property type="match status" value="1"/>
</dbReference>
<dbReference type="InterPro" id="IPR006935">
    <property type="entry name" value="Helicase/UvrB_N"/>
</dbReference>
<dbReference type="InterPro" id="IPR014001">
    <property type="entry name" value="Helicase_ATP-bd"/>
</dbReference>
<dbReference type="InterPro" id="IPR001650">
    <property type="entry name" value="Helicase_C-like"/>
</dbReference>
<dbReference type="InterPro" id="IPR027417">
    <property type="entry name" value="P-loop_NTPase"/>
</dbReference>
<dbReference type="InterPro" id="IPR001943">
    <property type="entry name" value="UVR_dom"/>
</dbReference>
<dbReference type="InterPro" id="IPR036876">
    <property type="entry name" value="UVR_dom_sf"/>
</dbReference>
<dbReference type="InterPro" id="IPR004807">
    <property type="entry name" value="UvrB"/>
</dbReference>
<dbReference type="InterPro" id="IPR041471">
    <property type="entry name" value="UvrB_inter"/>
</dbReference>
<dbReference type="InterPro" id="IPR024759">
    <property type="entry name" value="UvrB_YAD/RRR_dom"/>
</dbReference>
<dbReference type="NCBIfam" id="NF003673">
    <property type="entry name" value="PRK05298.1"/>
    <property type="match status" value="1"/>
</dbReference>
<dbReference type="NCBIfam" id="TIGR00631">
    <property type="entry name" value="uvrb"/>
    <property type="match status" value="1"/>
</dbReference>
<dbReference type="PANTHER" id="PTHR24029">
    <property type="entry name" value="UVRABC SYSTEM PROTEIN B"/>
    <property type="match status" value="1"/>
</dbReference>
<dbReference type="PANTHER" id="PTHR24029:SF0">
    <property type="entry name" value="UVRABC SYSTEM PROTEIN B"/>
    <property type="match status" value="1"/>
</dbReference>
<dbReference type="Pfam" id="PF00271">
    <property type="entry name" value="Helicase_C"/>
    <property type="match status" value="1"/>
</dbReference>
<dbReference type="Pfam" id="PF04851">
    <property type="entry name" value="ResIII"/>
    <property type="match status" value="1"/>
</dbReference>
<dbReference type="Pfam" id="PF02151">
    <property type="entry name" value="UVR"/>
    <property type="match status" value="1"/>
</dbReference>
<dbReference type="Pfam" id="PF12344">
    <property type="entry name" value="UvrB"/>
    <property type="match status" value="1"/>
</dbReference>
<dbReference type="Pfam" id="PF17757">
    <property type="entry name" value="UvrB_inter"/>
    <property type="match status" value="1"/>
</dbReference>
<dbReference type="SMART" id="SM00487">
    <property type="entry name" value="DEXDc"/>
    <property type="match status" value="1"/>
</dbReference>
<dbReference type="SMART" id="SM00490">
    <property type="entry name" value="HELICc"/>
    <property type="match status" value="1"/>
</dbReference>
<dbReference type="SUPFAM" id="SSF46600">
    <property type="entry name" value="C-terminal UvrC-binding domain of UvrB"/>
    <property type="match status" value="1"/>
</dbReference>
<dbReference type="SUPFAM" id="SSF52540">
    <property type="entry name" value="P-loop containing nucleoside triphosphate hydrolases"/>
    <property type="match status" value="2"/>
</dbReference>
<dbReference type="PROSITE" id="PS51192">
    <property type="entry name" value="HELICASE_ATP_BIND_1"/>
    <property type="match status" value="1"/>
</dbReference>
<dbReference type="PROSITE" id="PS51194">
    <property type="entry name" value="HELICASE_CTER"/>
    <property type="match status" value="1"/>
</dbReference>
<dbReference type="PROSITE" id="PS50151">
    <property type="entry name" value="UVR"/>
    <property type="match status" value="1"/>
</dbReference>
<name>UVRB_STAEQ</name>
<protein>
    <recommendedName>
        <fullName evidence="1">UvrABC system protein B</fullName>
        <shortName evidence="1">Protein UvrB</shortName>
    </recommendedName>
    <alternativeName>
        <fullName evidence="1">Excinuclease ABC subunit B</fullName>
    </alternativeName>
</protein>
<feature type="chain" id="PRO_0000138431" description="UvrABC system protein B">
    <location>
        <begin position="1"/>
        <end position="661"/>
    </location>
</feature>
<feature type="domain" description="Helicase ATP-binding" evidence="1">
    <location>
        <begin position="28"/>
        <end position="414"/>
    </location>
</feature>
<feature type="domain" description="Helicase C-terminal" evidence="1">
    <location>
        <begin position="432"/>
        <end position="598"/>
    </location>
</feature>
<feature type="domain" description="UVR" evidence="1">
    <location>
        <begin position="625"/>
        <end position="660"/>
    </location>
</feature>
<feature type="region of interest" description="Disordered" evidence="2">
    <location>
        <begin position="603"/>
        <end position="624"/>
    </location>
</feature>
<feature type="short sequence motif" description="Beta-hairpin">
    <location>
        <begin position="94"/>
        <end position="117"/>
    </location>
</feature>
<feature type="binding site" evidence="1">
    <location>
        <begin position="41"/>
        <end position="48"/>
    </location>
    <ligand>
        <name>ATP</name>
        <dbReference type="ChEBI" id="CHEBI:30616"/>
    </ligand>
</feature>
<sequence length="661" mass="76669">MVEHVPFKLKSEFEPQGDQPQAIQKIVDGVNEGKRHQTLLGATGTGKTFTMSNVIKEVGKPTLIIAHNKTLAGQLYSEFKEFFPENRVEYFVSYYDYYQPEAYVPSTDTFIEKDASINDEIDQLRHSATSSLFERDDVIIIASVSCIYGLGNPEEYKNLVVSVRVGMEMERSELLRKLVDVQYSRNDIDFQRGTFRVRGDVVEIFPASREEMCIRVEFFGDEIDRIREVNYLTGEVIREREHFTIFPASHFVTREEKMKVAIERIEKELEERLKELRDENKLLEAQRLEQRTNYDLEMMREMGFCSGIENYSVHLTLRPLGSTPYTLLDYFGDDWLVMIDESHVTLPQIRGMYNGDRARKQVLIDHGFRLPSALDNRPLKFEEFEEKTKQLVYVSATPGPYELEHTDEMVEQIIRPTGLLDPKIDVRPTENQIDDLLSEIQDRVDKDERVLVTTLTKKMSEDLTTYMKEAGIKVNYLHSEIKTLERIEIIRDLRMGTYDAIVGINLLREGIDIPEVSLVVILDADKEGFLRSDRSLIQTIGRAARNDKGEVIMYADKITDSMQYAIDETQRRREIQIAHNKEHGITPKTINKKIHDVISATVESDETNQQQQTELPKKMTKKERQKTIENIEKEMKKAAKDLDFEKATELRDMLFELKAEG</sequence>
<evidence type="ECO:0000255" key="1">
    <source>
        <dbReference type="HAMAP-Rule" id="MF_00204"/>
    </source>
</evidence>
<evidence type="ECO:0000256" key="2">
    <source>
        <dbReference type="SAM" id="MobiDB-lite"/>
    </source>
</evidence>
<gene>
    <name evidence="1" type="primary">uvrB</name>
    <name type="ordered locus">SERP0426</name>
</gene>
<reference key="1">
    <citation type="journal article" date="2005" name="J. Bacteriol.">
        <title>Insights on evolution of virulence and resistance from the complete genome analysis of an early methicillin-resistant Staphylococcus aureus strain and a biofilm-producing methicillin-resistant Staphylococcus epidermidis strain.</title>
        <authorList>
            <person name="Gill S.R."/>
            <person name="Fouts D.E."/>
            <person name="Archer G.L."/>
            <person name="Mongodin E.F."/>
            <person name="DeBoy R.T."/>
            <person name="Ravel J."/>
            <person name="Paulsen I.T."/>
            <person name="Kolonay J.F."/>
            <person name="Brinkac L.M."/>
            <person name="Beanan M.J."/>
            <person name="Dodson R.J."/>
            <person name="Daugherty S.C."/>
            <person name="Madupu R."/>
            <person name="Angiuoli S.V."/>
            <person name="Durkin A.S."/>
            <person name="Haft D.H."/>
            <person name="Vamathevan J.J."/>
            <person name="Khouri H."/>
            <person name="Utterback T.R."/>
            <person name="Lee C."/>
            <person name="Dimitrov G."/>
            <person name="Jiang L."/>
            <person name="Qin H."/>
            <person name="Weidman J."/>
            <person name="Tran K."/>
            <person name="Kang K.H."/>
            <person name="Hance I.R."/>
            <person name="Nelson K.E."/>
            <person name="Fraser C.M."/>
        </authorList>
    </citation>
    <scope>NUCLEOTIDE SEQUENCE [LARGE SCALE GENOMIC DNA]</scope>
    <source>
        <strain>ATCC 35984 / DSM 28319 / BCRC 17069 / CCUG 31568 / BM 3577 / RP62A</strain>
    </source>
</reference>
<keyword id="KW-0067">ATP-binding</keyword>
<keyword id="KW-0963">Cytoplasm</keyword>
<keyword id="KW-0227">DNA damage</keyword>
<keyword id="KW-0228">DNA excision</keyword>
<keyword id="KW-0234">DNA repair</keyword>
<keyword id="KW-0267">Excision nuclease</keyword>
<keyword id="KW-0547">Nucleotide-binding</keyword>
<keyword id="KW-1185">Reference proteome</keyword>
<keyword id="KW-0742">SOS response</keyword>
<proteinExistence type="inferred from homology"/>
<comment type="function">
    <text evidence="1">The UvrABC repair system catalyzes the recognition and processing of DNA lesions. A damage recognition complex composed of 2 UvrA and 2 UvrB subunits scans DNA for abnormalities. Upon binding of the UvrA(2)B(2) complex to a putative damaged site, the DNA wraps around one UvrB monomer. DNA wrap is dependent on ATP binding by UvrB and probably causes local melting of the DNA helix, facilitating insertion of UvrB beta-hairpin between the DNA strands. Then UvrB probes one DNA strand for the presence of a lesion. If a lesion is found the UvrA subunits dissociate and the UvrB-DNA preincision complex is formed. This complex is subsequently bound by UvrC and the second UvrB is released. If no lesion is found, the DNA wraps around the other UvrB subunit that will check the other stand for damage.</text>
</comment>
<comment type="subunit">
    <text evidence="1">Forms a heterotetramer with UvrA during the search for lesions. Interacts with UvrC in an incision complex.</text>
</comment>
<comment type="subcellular location">
    <subcellularLocation>
        <location evidence="1">Cytoplasm</location>
    </subcellularLocation>
</comment>
<comment type="domain">
    <text evidence="1">The beta-hairpin motif is involved in DNA binding.</text>
</comment>
<comment type="similarity">
    <text evidence="1">Belongs to the UvrB family.</text>
</comment>